<sequence>MALLTAAARLLGTKNASCLVLAARHASASSTNLKDILADLIPKEQARIKTFRQQHGKTVVGQITVDMMYGGMRGMKGLVYETSVLDPDEGIRFRGFSIPECQKLLPKAKGGEEPLPEGLFWLLVTGQIPTEEQVSWLSKEWAKRAALPSHVVTMLDNFPTNLHPMSQLSAAVTALNSESNFARAYAEGISRTKYWELIYEDSMDLIAKLPCIAAKIYRNLYREGSGIGAIDSNLDWSHNFTNMLGYTDSQFTELMRLYLTIHSDHEGGNVSAHTSHLVGSALSDPYLSFAAAMNGLAGPLHGLANQEVLVWLTQLQKEVGKDVSDEKLRDYIWNTLNSGRVVPGYGHAVLRKTDPRYTCQREFALKHLPNDPMFKLVAQLYKIVPNVLLEQGKAKNPWPNVDAHSGVLLQYYGMTEMNYYTVLFGVSRALGVLAQLIWSRALGFPLERPKSMSTEGLMKFVDSKSG</sequence>
<dbReference type="EC" id="2.3.3.1"/>
<dbReference type="EMBL" id="AB174355">
    <property type="protein sequence ID" value="BAE91417.1"/>
    <property type="molecule type" value="mRNA"/>
</dbReference>
<dbReference type="RefSeq" id="NP_001272053.1">
    <property type="nucleotide sequence ID" value="NM_001285124.1"/>
</dbReference>
<dbReference type="SMR" id="P0C1Z2"/>
<dbReference type="STRING" id="9541.ENSMFAP00000004989"/>
<dbReference type="eggNOG" id="KOG2617">
    <property type="taxonomic scope" value="Eukaryota"/>
</dbReference>
<dbReference type="UniPathway" id="UPA00223">
    <property type="reaction ID" value="UER00717"/>
</dbReference>
<dbReference type="Proteomes" id="UP000233100">
    <property type="component" value="Unplaced"/>
</dbReference>
<dbReference type="GO" id="GO:0005759">
    <property type="term" value="C:mitochondrial matrix"/>
    <property type="evidence" value="ECO:0000250"/>
    <property type="project" value="UniProtKB"/>
</dbReference>
<dbReference type="GO" id="GO:0004108">
    <property type="term" value="F:citrate (Si)-synthase activity"/>
    <property type="evidence" value="ECO:0000250"/>
    <property type="project" value="UniProtKB"/>
</dbReference>
<dbReference type="GO" id="GO:0042802">
    <property type="term" value="F:identical protein binding"/>
    <property type="evidence" value="ECO:0000250"/>
    <property type="project" value="UniProtKB"/>
</dbReference>
<dbReference type="GO" id="GO:0005975">
    <property type="term" value="P:carbohydrate metabolic process"/>
    <property type="evidence" value="ECO:0000250"/>
    <property type="project" value="UniProtKB"/>
</dbReference>
<dbReference type="GO" id="GO:0006101">
    <property type="term" value="P:citrate metabolic process"/>
    <property type="evidence" value="ECO:0007669"/>
    <property type="project" value="InterPro"/>
</dbReference>
<dbReference type="GO" id="GO:0006099">
    <property type="term" value="P:tricarboxylic acid cycle"/>
    <property type="evidence" value="ECO:0007669"/>
    <property type="project" value="UniProtKB-UniPathway"/>
</dbReference>
<dbReference type="CDD" id="cd06105">
    <property type="entry name" value="ScCit1-2_like"/>
    <property type="match status" value="1"/>
</dbReference>
<dbReference type="FunFam" id="1.10.230.10:FF:000001">
    <property type="entry name" value="Citrate synthase"/>
    <property type="match status" value="1"/>
</dbReference>
<dbReference type="FunFam" id="1.10.580.10:FF:000001">
    <property type="entry name" value="Citrate synthase"/>
    <property type="match status" value="1"/>
</dbReference>
<dbReference type="Gene3D" id="1.10.580.10">
    <property type="entry name" value="Citrate Synthase, domain 1"/>
    <property type="match status" value="1"/>
</dbReference>
<dbReference type="Gene3D" id="1.10.230.10">
    <property type="entry name" value="Cytochrome P450-Terp, domain 2"/>
    <property type="match status" value="1"/>
</dbReference>
<dbReference type="InterPro" id="IPR016142">
    <property type="entry name" value="Citrate_synth-like_lrg_a-sub"/>
</dbReference>
<dbReference type="InterPro" id="IPR016143">
    <property type="entry name" value="Citrate_synth-like_sm_a-sub"/>
</dbReference>
<dbReference type="InterPro" id="IPR002020">
    <property type="entry name" value="Citrate_synthase"/>
</dbReference>
<dbReference type="InterPro" id="IPR019810">
    <property type="entry name" value="Citrate_synthase_AS"/>
</dbReference>
<dbReference type="InterPro" id="IPR010109">
    <property type="entry name" value="Citrate_synthase_euk"/>
</dbReference>
<dbReference type="InterPro" id="IPR036969">
    <property type="entry name" value="Citrate_synthase_sf"/>
</dbReference>
<dbReference type="NCBIfam" id="TIGR01793">
    <property type="entry name" value="cit_synth_euk"/>
    <property type="match status" value="1"/>
</dbReference>
<dbReference type="NCBIfam" id="NF007128">
    <property type="entry name" value="PRK09569.1"/>
    <property type="match status" value="1"/>
</dbReference>
<dbReference type="PANTHER" id="PTHR11739">
    <property type="entry name" value="CITRATE SYNTHASE"/>
    <property type="match status" value="1"/>
</dbReference>
<dbReference type="PANTHER" id="PTHR11739:SF8">
    <property type="entry name" value="CITRATE SYNTHASE, MITOCHONDRIAL"/>
    <property type="match status" value="1"/>
</dbReference>
<dbReference type="Pfam" id="PF00285">
    <property type="entry name" value="Citrate_synt"/>
    <property type="match status" value="1"/>
</dbReference>
<dbReference type="PRINTS" id="PR00143">
    <property type="entry name" value="CITRTSNTHASE"/>
</dbReference>
<dbReference type="SUPFAM" id="SSF48256">
    <property type="entry name" value="Citrate synthase"/>
    <property type="match status" value="1"/>
</dbReference>
<dbReference type="PROSITE" id="PS00480">
    <property type="entry name" value="CITRATE_SYNTHASE"/>
    <property type="match status" value="1"/>
</dbReference>
<comment type="function">
    <text evidence="7">Key enzyme of the Krebs tricarboxylic acid cycle which catalyzes the synthesis of citrate from acetyl coenzyme A and oxaloacetate.</text>
</comment>
<comment type="catalytic activity">
    <reaction evidence="6">
        <text>oxaloacetate + acetyl-CoA + H2O = citrate + CoA + H(+)</text>
        <dbReference type="Rhea" id="RHEA:16845"/>
        <dbReference type="ChEBI" id="CHEBI:15377"/>
        <dbReference type="ChEBI" id="CHEBI:15378"/>
        <dbReference type="ChEBI" id="CHEBI:16452"/>
        <dbReference type="ChEBI" id="CHEBI:16947"/>
        <dbReference type="ChEBI" id="CHEBI:57287"/>
        <dbReference type="ChEBI" id="CHEBI:57288"/>
        <dbReference type="EC" id="2.3.3.1"/>
    </reaction>
</comment>
<comment type="pathway">
    <text>Carbohydrate metabolism; tricarboxylic acid cycle; isocitrate from oxaloacetate: step 1/2.</text>
</comment>
<comment type="subunit">
    <text evidence="2">Homodimer.</text>
</comment>
<comment type="subcellular location">
    <subcellularLocation>
        <location evidence="3">Mitochondrion matrix</location>
    </subcellularLocation>
</comment>
<comment type="PTM">
    <text evidence="2">Methylated. Trimethylation at Lys-395 by CSKMT decreases citrate synthase activity.</text>
</comment>
<comment type="PTM">
    <text evidence="2">In response to mitochondrial stress, the precursor protein is ubiquitinated by the SIFI complex in the cytoplasm before mitochondrial import, leading to its degradation. Within the SIFI complex, UBR4 initiates ubiquitin chain that are further elongated or branched by KCMF1.</text>
</comment>
<comment type="miscellaneous">
    <text>Citrate synthase is found in nearly all cells capable of oxidative metabolism.</text>
</comment>
<comment type="similarity">
    <text evidence="7">Belongs to the citrate synthase family.</text>
</comment>
<accession>P0C1Z2</accession>
<feature type="transit peptide" description="Mitochondrion" evidence="1">
    <location>
        <begin position="1"/>
        <end position="27"/>
    </location>
</feature>
<feature type="chain" id="PRO_0000235795" description="Citrate synthase, mitochondrial">
    <location>
        <begin position="28"/>
        <end position="466"/>
    </location>
</feature>
<feature type="short sequence motif" description="SIFI-degron" evidence="2">
    <location>
        <begin position="2"/>
        <end position="21"/>
    </location>
</feature>
<feature type="active site" evidence="6">
    <location>
        <position position="301"/>
    </location>
</feature>
<feature type="active site" evidence="6">
    <location>
        <position position="347"/>
    </location>
</feature>
<feature type="active site" evidence="6">
    <location>
        <position position="402"/>
    </location>
</feature>
<feature type="binding site" description="in chain A" evidence="2">
    <location>
        <position position="356"/>
    </location>
    <ligand>
        <name>oxaloacetate</name>
        <dbReference type="ChEBI" id="CHEBI:16452"/>
        <note>ligand shared between homodimeric partners</note>
    </ligand>
</feature>
<feature type="binding site" description="in chain A" evidence="2">
    <location>
        <position position="428"/>
    </location>
    <ligand>
        <name>oxaloacetate</name>
        <dbReference type="ChEBI" id="CHEBI:16452"/>
        <note>ligand shared between homodimeric partners</note>
    </ligand>
</feature>
<feature type="binding site" description="in chain B" evidence="2">
    <location>
        <position position="448"/>
    </location>
    <ligand>
        <name>oxaloacetate</name>
        <dbReference type="ChEBI" id="CHEBI:16452"/>
        <note>ligand shared between homodimeric partners</note>
    </ligand>
</feature>
<feature type="modified residue" description="N6-succinyllysine" evidence="5">
    <location>
        <position position="57"/>
    </location>
</feature>
<feature type="modified residue" description="N6-acetyllysine; alternate" evidence="4">
    <location>
        <position position="76"/>
    </location>
</feature>
<feature type="modified residue" description="N6-succinyllysine; alternate" evidence="4">
    <location>
        <position position="76"/>
    </location>
</feature>
<feature type="modified residue" description="N6-succinyllysine" evidence="5">
    <location>
        <position position="103"/>
    </location>
</feature>
<feature type="modified residue" description="N6-succinyllysine" evidence="5">
    <location>
        <position position="193"/>
    </location>
</feature>
<feature type="modified residue" description="N6-acetyllysine; alternate" evidence="5">
    <location>
        <position position="321"/>
    </location>
</feature>
<feature type="modified residue" description="N6-succinyllysine; alternate" evidence="5">
    <location>
        <position position="321"/>
    </location>
</feature>
<feature type="modified residue" description="N6-acetyllysine; alternate" evidence="2">
    <location>
        <position position="327"/>
    </location>
</feature>
<feature type="modified residue" description="N6-succinyllysine; alternate" evidence="5">
    <location>
        <position position="327"/>
    </location>
</feature>
<feature type="modified residue" description="N6-acetyllysine; alternate" evidence="2">
    <location>
        <position position="375"/>
    </location>
</feature>
<feature type="modified residue" description="N6-succinyllysine; alternate" evidence="5">
    <location>
        <position position="375"/>
    </location>
</feature>
<feature type="modified residue" description="N6-acetyllysine" evidence="2">
    <location>
        <position position="382"/>
    </location>
</feature>
<feature type="modified residue" description="N6-acetyllysine; alternate" evidence="2">
    <location>
        <position position="393"/>
    </location>
</feature>
<feature type="modified residue" description="N6-succinyllysine; alternate" evidence="5">
    <location>
        <position position="393"/>
    </location>
</feature>
<feature type="modified residue" description="N6,N6,N6-trimethyllysine" evidence="2">
    <location>
        <position position="395"/>
    </location>
</feature>
<feature type="modified residue" description="N6-succinyllysine" evidence="5">
    <location>
        <position position="450"/>
    </location>
</feature>
<feature type="modified residue" description="N6-acetyllysine; alternate" evidence="5">
    <location>
        <position position="459"/>
    </location>
</feature>
<feature type="modified residue" description="N6-succinyllysine; alternate" evidence="5">
    <location>
        <position position="459"/>
    </location>
</feature>
<protein>
    <recommendedName>
        <fullName>Citrate synthase, mitochondrial</fullName>
        <ecNumber>2.3.3.1</ecNumber>
    </recommendedName>
    <alternativeName>
        <fullName>Citrate (Si)-synthase</fullName>
    </alternativeName>
</protein>
<reference key="1">
    <citation type="submission" date="2006-03" db="EMBL/GenBank/DDBJ databases">
        <title>DNA sequences of macaque genes expressed in brain or testis and its evolutionary implications.</title>
        <authorList>
            <consortium name="International consortium for macaque cDNA sequencing and analysis"/>
        </authorList>
    </citation>
    <scope>NUCLEOTIDE SEQUENCE [LARGE SCALE MRNA]</scope>
    <source>
        <tissue>Temporal cortex</tissue>
    </source>
</reference>
<proteinExistence type="evidence at transcript level"/>
<keyword id="KW-0007">Acetylation</keyword>
<keyword id="KW-0488">Methylation</keyword>
<keyword id="KW-0496">Mitochondrion</keyword>
<keyword id="KW-1185">Reference proteome</keyword>
<keyword id="KW-0808">Transferase</keyword>
<keyword id="KW-0809">Transit peptide</keyword>
<keyword id="KW-0816">Tricarboxylic acid cycle</keyword>
<keyword id="KW-0832">Ubl conjugation</keyword>
<name>CISY_MACFA</name>
<evidence type="ECO:0000250" key="1"/>
<evidence type="ECO:0000250" key="2">
    <source>
        <dbReference type="UniProtKB" id="O75390"/>
    </source>
</evidence>
<evidence type="ECO:0000250" key="3">
    <source>
        <dbReference type="UniProtKB" id="P00889"/>
    </source>
</evidence>
<evidence type="ECO:0000250" key="4">
    <source>
        <dbReference type="UniProtKB" id="Q29RK1"/>
    </source>
</evidence>
<evidence type="ECO:0000250" key="5">
    <source>
        <dbReference type="UniProtKB" id="Q9CZU6"/>
    </source>
</evidence>
<evidence type="ECO:0000255" key="6">
    <source>
        <dbReference type="PROSITE-ProRule" id="PRU10117"/>
    </source>
</evidence>
<evidence type="ECO:0000305" key="7"/>
<organism>
    <name type="scientific">Macaca fascicularis</name>
    <name type="common">Crab-eating macaque</name>
    <name type="synonym">Cynomolgus monkey</name>
    <dbReference type="NCBI Taxonomy" id="9541"/>
    <lineage>
        <taxon>Eukaryota</taxon>
        <taxon>Metazoa</taxon>
        <taxon>Chordata</taxon>
        <taxon>Craniata</taxon>
        <taxon>Vertebrata</taxon>
        <taxon>Euteleostomi</taxon>
        <taxon>Mammalia</taxon>
        <taxon>Eutheria</taxon>
        <taxon>Euarchontoglires</taxon>
        <taxon>Primates</taxon>
        <taxon>Haplorrhini</taxon>
        <taxon>Catarrhini</taxon>
        <taxon>Cercopithecidae</taxon>
        <taxon>Cercopithecinae</taxon>
        <taxon>Macaca</taxon>
    </lineage>
</organism>
<gene>
    <name type="primary">CS</name>
    <name type="ORF">QtrA-16253</name>
</gene>